<protein>
    <recommendedName>
        <fullName>Tryptophan synthase beta chain</fullName>
        <ecNumber>4.2.1.20</ecNumber>
    </recommendedName>
</protein>
<name>TRPB_KLEAE</name>
<keyword id="KW-0028">Amino-acid biosynthesis</keyword>
<keyword id="KW-0057">Aromatic amino acid biosynthesis</keyword>
<keyword id="KW-0456">Lyase</keyword>
<keyword id="KW-0663">Pyridoxal phosphate</keyword>
<keyword id="KW-0822">Tryptophan biosynthesis</keyword>
<feature type="chain" id="PRO_0000098957" description="Tryptophan synthase beta chain">
    <location>
        <begin position="1" status="less than"/>
        <end position="19"/>
    </location>
</feature>
<feature type="non-terminal residue">
    <location>
        <position position="1"/>
    </location>
</feature>
<gene>
    <name type="primary">trpB</name>
</gene>
<dbReference type="EC" id="4.2.1.20"/>
<dbReference type="EMBL" id="V00630">
    <property type="protein sequence ID" value="CAA23901.1"/>
    <property type="molecule type" value="Genomic_DNA"/>
</dbReference>
<dbReference type="EMBL" id="J01738">
    <property type="protein sequence ID" value="AAA25144.1"/>
    <property type="molecule type" value="Genomic_DNA"/>
</dbReference>
<dbReference type="STRING" id="548.EAG7_01142"/>
<dbReference type="UniPathway" id="UPA00035">
    <property type="reaction ID" value="UER00044"/>
</dbReference>
<dbReference type="GO" id="GO:0004834">
    <property type="term" value="F:tryptophan synthase activity"/>
    <property type="evidence" value="ECO:0007669"/>
    <property type="project" value="UniProtKB-EC"/>
</dbReference>
<proteinExistence type="inferred from homology"/>
<reference key="1">
    <citation type="journal article" date="1981" name="Nucleic Acids Res.">
        <title>Comparison of the nucleoside sequence of trpA and sequences immediately beyond the trp operon of Klebsiella aerogenes. Salmonella typhimurium and Escherichia coli.</title>
        <authorList>
            <person name="Nichols B.P."/>
            <person name="Blumenberg M."/>
            <person name="Yanofsky C."/>
        </authorList>
    </citation>
    <scope>NUCLEOTIDE SEQUENCE [GENOMIC DNA]</scope>
</reference>
<evidence type="ECO:0000250" key="1"/>
<evidence type="ECO:0000305" key="2"/>
<comment type="function">
    <text evidence="1">The beta subunit is responsible for the synthesis of L-tryptophan from indole and L-serine.</text>
</comment>
<comment type="catalytic activity">
    <reaction>
        <text>(1S,2R)-1-C-(indol-3-yl)glycerol 3-phosphate + L-serine = D-glyceraldehyde 3-phosphate + L-tryptophan + H2O</text>
        <dbReference type="Rhea" id="RHEA:10532"/>
        <dbReference type="ChEBI" id="CHEBI:15377"/>
        <dbReference type="ChEBI" id="CHEBI:33384"/>
        <dbReference type="ChEBI" id="CHEBI:57912"/>
        <dbReference type="ChEBI" id="CHEBI:58866"/>
        <dbReference type="ChEBI" id="CHEBI:59776"/>
        <dbReference type="EC" id="4.2.1.20"/>
    </reaction>
</comment>
<comment type="cofactor">
    <cofactor evidence="1">
        <name>pyridoxal 5'-phosphate</name>
        <dbReference type="ChEBI" id="CHEBI:597326"/>
    </cofactor>
</comment>
<comment type="pathway">
    <text>Amino-acid biosynthesis; L-tryptophan biosynthesis; L-tryptophan from chorismate: step 5/5.</text>
</comment>
<comment type="subunit">
    <text evidence="1">Tetramer of two alpha and two beta chains.</text>
</comment>
<comment type="similarity">
    <text evidence="2">Belongs to the TrpB family.</text>
</comment>
<accession>P14552</accession>
<sequence>RGDKDIFTVHDILKARGEI</sequence>
<organism>
    <name type="scientific">Klebsiella aerogenes</name>
    <name type="common">Enterobacter aerogenes</name>
    <dbReference type="NCBI Taxonomy" id="548"/>
    <lineage>
        <taxon>Bacteria</taxon>
        <taxon>Pseudomonadati</taxon>
        <taxon>Pseudomonadota</taxon>
        <taxon>Gammaproteobacteria</taxon>
        <taxon>Enterobacterales</taxon>
        <taxon>Enterobacteriaceae</taxon>
        <taxon>Klebsiella/Raoultella group</taxon>
        <taxon>Klebsiella</taxon>
    </lineage>
</organism>